<accession>Q27S09</accession>
<accession>Q2VEE0</accession>
<evidence type="ECO:0000255" key="1">
    <source>
        <dbReference type="HAMAP-Rule" id="MF_00531"/>
    </source>
</evidence>
<evidence type="ECO:0000305" key="2"/>
<name>RR19_SOLTU</name>
<keyword id="KW-0150">Chloroplast</keyword>
<keyword id="KW-0934">Plastid</keyword>
<keyword id="KW-1185">Reference proteome</keyword>
<keyword id="KW-0687">Ribonucleoprotein</keyword>
<keyword id="KW-0689">Ribosomal protein</keyword>
<keyword id="KW-0694">RNA-binding</keyword>
<keyword id="KW-0699">rRNA-binding</keyword>
<organism>
    <name type="scientific">Solanum tuberosum</name>
    <name type="common">Potato</name>
    <dbReference type="NCBI Taxonomy" id="4113"/>
    <lineage>
        <taxon>Eukaryota</taxon>
        <taxon>Viridiplantae</taxon>
        <taxon>Streptophyta</taxon>
        <taxon>Embryophyta</taxon>
        <taxon>Tracheophyta</taxon>
        <taxon>Spermatophyta</taxon>
        <taxon>Magnoliopsida</taxon>
        <taxon>eudicotyledons</taxon>
        <taxon>Gunneridae</taxon>
        <taxon>Pentapetalae</taxon>
        <taxon>asterids</taxon>
        <taxon>lamiids</taxon>
        <taxon>Solanales</taxon>
        <taxon>Solanaceae</taxon>
        <taxon>Solanoideae</taxon>
        <taxon>Solaneae</taxon>
        <taxon>Solanum</taxon>
    </lineage>
</organism>
<proteinExistence type="inferred from homology"/>
<comment type="function">
    <text evidence="1">Protein S19 forms a complex with S13 that binds strongly to the 16S ribosomal RNA.</text>
</comment>
<comment type="subcellular location">
    <subcellularLocation>
        <location>Plastid</location>
        <location>Chloroplast</location>
    </subcellularLocation>
</comment>
<comment type="similarity">
    <text evidence="1">Belongs to the universal ribosomal protein uS19 family.</text>
</comment>
<dbReference type="EMBL" id="DQ231562">
    <property type="protein sequence ID" value="ABB90078.1"/>
    <property type="molecule type" value="Genomic_DNA"/>
</dbReference>
<dbReference type="EMBL" id="DQ386163">
    <property type="protein sequence ID" value="ABD47096.1"/>
    <property type="molecule type" value="Genomic_DNA"/>
</dbReference>
<dbReference type="RefSeq" id="YP_635679.1">
    <property type="nucleotide sequence ID" value="NC_008096.2"/>
</dbReference>
<dbReference type="SMR" id="Q27S09"/>
<dbReference type="FunCoup" id="Q27S09">
    <property type="interactions" value="82"/>
</dbReference>
<dbReference type="STRING" id="4113.Q27S09"/>
<dbReference type="GeneID" id="4099884"/>
<dbReference type="KEGG" id="sot:4099884"/>
<dbReference type="InParanoid" id="Q27S09"/>
<dbReference type="OrthoDB" id="2043at2759"/>
<dbReference type="Proteomes" id="UP000011115">
    <property type="component" value="Unassembled WGS sequence"/>
</dbReference>
<dbReference type="GO" id="GO:0009507">
    <property type="term" value="C:chloroplast"/>
    <property type="evidence" value="ECO:0007669"/>
    <property type="project" value="UniProtKB-SubCell"/>
</dbReference>
<dbReference type="GO" id="GO:0005763">
    <property type="term" value="C:mitochondrial small ribosomal subunit"/>
    <property type="evidence" value="ECO:0000318"/>
    <property type="project" value="GO_Central"/>
</dbReference>
<dbReference type="GO" id="GO:0019843">
    <property type="term" value="F:rRNA binding"/>
    <property type="evidence" value="ECO:0007669"/>
    <property type="project" value="UniProtKB-UniRule"/>
</dbReference>
<dbReference type="GO" id="GO:0003735">
    <property type="term" value="F:structural constituent of ribosome"/>
    <property type="evidence" value="ECO:0000318"/>
    <property type="project" value="GO_Central"/>
</dbReference>
<dbReference type="GO" id="GO:0000028">
    <property type="term" value="P:ribosomal small subunit assembly"/>
    <property type="evidence" value="ECO:0000318"/>
    <property type="project" value="GO_Central"/>
</dbReference>
<dbReference type="GO" id="GO:0006412">
    <property type="term" value="P:translation"/>
    <property type="evidence" value="ECO:0007669"/>
    <property type="project" value="UniProtKB-UniRule"/>
</dbReference>
<dbReference type="FunFam" id="3.30.860.10:FF:000001">
    <property type="entry name" value="30S ribosomal protein S19"/>
    <property type="match status" value="1"/>
</dbReference>
<dbReference type="Gene3D" id="3.30.860.10">
    <property type="entry name" value="30s Ribosomal Protein S19, Chain A"/>
    <property type="match status" value="1"/>
</dbReference>
<dbReference type="HAMAP" id="MF_00531">
    <property type="entry name" value="Ribosomal_uS19"/>
    <property type="match status" value="1"/>
</dbReference>
<dbReference type="InterPro" id="IPR002222">
    <property type="entry name" value="Ribosomal_uS19"/>
</dbReference>
<dbReference type="InterPro" id="IPR005732">
    <property type="entry name" value="Ribosomal_uS19_bac-type"/>
</dbReference>
<dbReference type="InterPro" id="IPR020934">
    <property type="entry name" value="Ribosomal_uS19_CS"/>
</dbReference>
<dbReference type="InterPro" id="IPR023575">
    <property type="entry name" value="Ribosomal_uS19_SF"/>
</dbReference>
<dbReference type="NCBIfam" id="TIGR01050">
    <property type="entry name" value="rpsS_bact"/>
    <property type="match status" value="1"/>
</dbReference>
<dbReference type="PANTHER" id="PTHR11880">
    <property type="entry name" value="RIBOSOMAL PROTEIN S19P FAMILY MEMBER"/>
    <property type="match status" value="1"/>
</dbReference>
<dbReference type="PANTHER" id="PTHR11880:SF8">
    <property type="entry name" value="SMALL RIBOSOMAL SUBUNIT PROTEIN US19M"/>
    <property type="match status" value="1"/>
</dbReference>
<dbReference type="Pfam" id="PF00203">
    <property type="entry name" value="Ribosomal_S19"/>
    <property type="match status" value="1"/>
</dbReference>
<dbReference type="PIRSF" id="PIRSF002144">
    <property type="entry name" value="Ribosomal_S19"/>
    <property type="match status" value="1"/>
</dbReference>
<dbReference type="PRINTS" id="PR00975">
    <property type="entry name" value="RIBOSOMALS19"/>
</dbReference>
<dbReference type="SUPFAM" id="SSF54570">
    <property type="entry name" value="Ribosomal protein S19"/>
    <property type="match status" value="1"/>
</dbReference>
<dbReference type="PROSITE" id="PS00323">
    <property type="entry name" value="RIBOSOMAL_S19"/>
    <property type="match status" value="1"/>
</dbReference>
<reference key="1">
    <citation type="journal article" date="2006" name="Plant Cell Rep.">
        <title>The complete chloroplast genome sequences of Solanum tuberosum and comparative analysis with Solanaceae species identified the presence of a 241-bp deletion in cultivated potato chloroplast DNA sequence.</title>
        <authorList>
            <person name="Chung H.-J."/>
            <person name="Jung J.D."/>
            <person name="Park H.-W."/>
            <person name="Kim J.-H."/>
            <person name="Cha H.W."/>
            <person name="Min S.R."/>
            <person name="Jeong W.-J."/>
            <person name="Liu J.R."/>
        </authorList>
    </citation>
    <scope>NUCLEOTIDE SEQUENCE [LARGE SCALE GENOMIC DNA]</scope>
    <source>
        <strain>cv. Desiree</strain>
    </source>
</reference>
<reference key="2">
    <citation type="submission" date="2006-02" db="EMBL/GenBank/DDBJ databases">
        <title>Complete chloroplast genome sequences of Solanum tuberosum cultivar Desiree and comparative analyses with other Solanaceae genomes.</title>
        <authorList>
            <person name="Gargano D."/>
            <person name="Scotti N."/>
            <person name="Vezzi A."/>
            <person name="Bilardi A."/>
            <person name="Valle G."/>
            <person name="Grillo S."/>
            <person name="Cardi T."/>
        </authorList>
    </citation>
    <scope>NUCLEOTIDE SEQUENCE [LARGE SCALE GENOMIC DNA]</scope>
    <source>
        <strain>cv. Desiree</strain>
    </source>
</reference>
<sequence length="92" mass="10443">MTRSLKKNPFVANHLLKKIDKLNTKAEKEIIVTWSRASTIIPTMIGHTIAIHNGKEHLPIYITDSMVGHKLGEFAPTLNFRGHAKSDNRSRR</sequence>
<feature type="chain" id="PRO_0000276925" description="Small ribosomal subunit protein uS19c">
    <location>
        <begin position="1"/>
        <end position="92"/>
    </location>
</feature>
<feature type="sequence conflict" description="In Ref. 1; ABB90078." evidence="2" ref="1">
    <original>S</original>
    <variation>F</variation>
    <location>
        <position position="38"/>
    </location>
</feature>
<feature type="sequence conflict" description="In Ref. 1; ABB90078." evidence="2" ref="1">
    <original>E</original>
    <variation>K</variation>
    <location>
        <position position="56"/>
    </location>
</feature>
<feature type="sequence conflict" description="In Ref. 1; ABB90078." evidence="2" ref="1">
    <original>R</original>
    <variation>K</variation>
    <location>
        <position position="81"/>
    </location>
</feature>
<protein>
    <recommendedName>
        <fullName evidence="1">Small ribosomal subunit protein uS19c</fullName>
    </recommendedName>
    <alternativeName>
        <fullName evidence="2">30S ribosomal protein S19, chloroplastic</fullName>
    </alternativeName>
</protein>
<geneLocation type="chloroplast"/>
<gene>
    <name evidence="1" type="primary">rps19</name>
</gene>